<gene>
    <name evidence="1" type="primary">infA</name>
    <name type="ordered locus">FTL_1236</name>
</gene>
<name>IF1_FRATH</name>
<dbReference type="EMBL" id="AM233362">
    <property type="protein sequence ID" value="CAJ79675.1"/>
    <property type="molecule type" value="Genomic_DNA"/>
</dbReference>
<dbReference type="RefSeq" id="WP_003016350.1">
    <property type="nucleotide sequence ID" value="NZ_CP009694.1"/>
</dbReference>
<dbReference type="SMR" id="Q2A2Y6"/>
<dbReference type="KEGG" id="ftl:FTL_1236"/>
<dbReference type="Proteomes" id="UP000001944">
    <property type="component" value="Chromosome"/>
</dbReference>
<dbReference type="GO" id="GO:0005829">
    <property type="term" value="C:cytosol"/>
    <property type="evidence" value="ECO:0007669"/>
    <property type="project" value="TreeGrafter"/>
</dbReference>
<dbReference type="GO" id="GO:0043022">
    <property type="term" value="F:ribosome binding"/>
    <property type="evidence" value="ECO:0007669"/>
    <property type="project" value="UniProtKB-UniRule"/>
</dbReference>
<dbReference type="GO" id="GO:0019843">
    <property type="term" value="F:rRNA binding"/>
    <property type="evidence" value="ECO:0007669"/>
    <property type="project" value="UniProtKB-UniRule"/>
</dbReference>
<dbReference type="GO" id="GO:0003743">
    <property type="term" value="F:translation initiation factor activity"/>
    <property type="evidence" value="ECO:0007669"/>
    <property type="project" value="UniProtKB-UniRule"/>
</dbReference>
<dbReference type="CDD" id="cd04451">
    <property type="entry name" value="S1_IF1"/>
    <property type="match status" value="1"/>
</dbReference>
<dbReference type="FunFam" id="2.40.50.140:FF:000002">
    <property type="entry name" value="Translation initiation factor IF-1"/>
    <property type="match status" value="1"/>
</dbReference>
<dbReference type="Gene3D" id="2.40.50.140">
    <property type="entry name" value="Nucleic acid-binding proteins"/>
    <property type="match status" value="1"/>
</dbReference>
<dbReference type="HAMAP" id="MF_00075">
    <property type="entry name" value="IF_1"/>
    <property type="match status" value="1"/>
</dbReference>
<dbReference type="InterPro" id="IPR012340">
    <property type="entry name" value="NA-bd_OB-fold"/>
</dbReference>
<dbReference type="InterPro" id="IPR006196">
    <property type="entry name" value="RNA-binding_domain_S1_IF1"/>
</dbReference>
<dbReference type="InterPro" id="IPR003029">
    <property type="entry name" value="S1_domain"/>
</dbReference>
<dbReference type="InterPro" id="IPR004368">
    <property type="entry name" value="TIF_IF1"/>
</dbReference>
<dbReference type="NCBIfam" id="TIGR00008">
    <property type="entry name" value="infA"/>
    <property type="match status" value="1"/>
</dbReference>
<dbReference type="PANTHER" id="PTHR33370">
    <property type="entry name" value="TRANSLATION INITIATION FACTOR IF-1, CHLOROPLASTIC"/>
    <property type="match status" value="1"/>
</dbReference>
<dbReference type="PANTHER" id="PTHR33370:SF1">
    <property type="entry name" value="TRANSLATION INITIATION FACTOR IF-1, CHLOROPLASTIC"/>
    <property type="match status" value="1"/>
</dbReference>
<dbReference type="Pfam" id="PF01176">
    <property type="entry name" value="eIF-1a"/>
    <property type="match status" value="1"/>
</dbReference>
<dbReference type="SMART" id="SM00316">
    <property type="entry name" value="S1"/>
    <property type="match status" value="1"/>
</dbReference>
<dbReference type="SUPFAM" id="SSF50249">
    <property type="entry name" value="Nucleic acid-binding proteins"/>
    <property type="match status" value="1"/>
</dbReference>
<dbReference type="PROSITE" id="PS50832">
    <property type="entry name" value="S1_IF1_TYPE"/>
    <property type="match status" value="1"/>
</dbReference>
<reference key="1">
    <citation type="submission" date="2006-03" db="EMBL/GenBank/DDBJ databases">
        <title>Complete genome sequence of Francisella tularensis LVS (Live Vaccine Strain).</title>
        <authorList>
            <person name="Chain P."/>
            <person name="Larimer F."/>
            <person name="Land M."/>
            <person name="Stilwagen S."/>
            <person name="Larsson P."/>
            <person name="Bearden S."/>
            <person name="Chu M."/>
            <person name="Oyston P."/>
            <person name="Forsman M."/>
            <person name="Andersson S."/>
            <person name="Lindler L."/>
            <person name="Titball R."/>
            <person name="Garcia E."/>
        </authorList>
    </citation>
    <scope>NUCLEOTIDE SEQUENCE [LARGE SCALE GENOMIC DNA]</scope>
    <source>
        <strain>LVS</strain>
    </source>
</reference>
<sequence>MAKEDCIEMEGVVLEALPNTMFRVELENGRIVTAHISGKMRKNYIRILTGDKVVVEITPYDLTKGRIKFRSK</sequence>
<evidence type="ECO:0000255" key="1">
    <source>
        <dbReference type="HAMAP-Rule" id="MF_00075"/>
    </source>
</evidence>
<organism>
    <name type="scientific">Francisella tularensis subsp. holarctica (strain LVS)</name>
    <dbReference type="NCBI Taxonomy" id="376619"/>
    <lineage>
        <taxon>Bacteria</taxon>
        <taxon>Pseudomonadati</taxon>
        <taxon>Pseudomonadota</taxon>
        <taxon>Gammaproteobacteria</taxon>
        <taxon>Thiotrichales</taxon>
        <taxon>Francisellaceae</taxon>
        <taxon>Francisella</taxon>
    </lineage>
</organism>
<accession>Q2A2Y6</accession>
<proteinExistence type="inferred from homology"/>
<comment type="function">
    <text evidence="1">One of the essential components for the initiation of protein synthesis. Stabilizes the binding of IF-2 and IF-3 on the 30S subunit to which N-formylmethionyl-tRNA(fMet) subsequently binds. Helps modulate mRNA selection, yielding the 30S pre-initiation complex (PIC). Upon addition of the 50S ribosomal subunit IF-1, IF-2 and IF-3 are released leaving the mature 70S translation initiation complex.</text>
</comment>
<comment type="subunit">
    <text evidence="1">Component of the 30S ribosomal translation pre-initiation complex which assembles on the 30S ribosome in the order IF-2 and IF-3, IF-1 and N-formylmethionyl-tRNA(fMet); mRNA recruitment can occur at any time during PIC assembly.</text>
</comment>
<comment type="subcellular location">
    <subcellularLocation>
        <location evidence="1">Cytoplasm</location>
    </subcellularLocation>
</comment>
<comment type="similarity">
    <text evidence="1">Belongs to the IF-1 family.</text>
</comment>
<protein>
    <recommendedName>
        <fullName evidence="1">Translation initiation factor IF-1</fullName>
    </recommendedName>
</protein>
<keyword id="KW-0963">Cytoplasm</keyword>
<keyword id="KW-0396">Initiation factor</keyword>
<keyword id="KW-0648">Protein biosynthesis</keyword>
<keyword id="KW-1185">Reference proteome</keyword>
<keyword id="KW-0694">RNA-binding</keyword>
<keyword id="KW-0699">rRNA-binding</keyword>
<feature type="chain" id="PRO_0000263801" description="Translation initiation factor IF-1">
    <location>
        <begin position="1"/>
        <end position="72"/>
    </location>
</feature>
<feature type="domain" description="S1-like" evidence="1">
    <location>
        <begin position="1"/>
        <end position="72"/>
    </location>
</feature>